<keyword id="KW-1185">Reference proteome</keyword>
<keyword id="KW-0732">Signal</keyword>
<organism>
    <name type="scientific">Leptosphaeria maculans (strain JN3 / isolate v23.1.3 / race Av1-4-5-6-7-8)</name>
    <name type="common">Blackleg fungus</name>
    <name type="synonym">Phoma lingam</name>
    <dbReference type="NCBI Taxonomy" id="985895"/>
    <lineage>
        <taxon>Eukaryota</taxon>
        <taxon>Fungi</taxon>
        <taxon>Dikarya</taxon>
        <taxon>Ascomycota</taxon>
        <taxon>Pezizomycotina</taxon>
        <taxon>Dothideomycetes</taxon>
        <taxon>Pleosporomycetidae</taxon>
        <taxon>Pleosporales</taxon>
        <taxon>Pleosporineae</taxon>
        <taxon>Leptosphaeriaceae</taxon>
        <taxon>Plenodomus</taxon>
        <taxon>Plenodomus lingam/Leptosphaeria maculans species complex</taxon>
    </lineage>
</organism>
<gene>
    <name type="primary">LCL2</name>
    <name type="ORF">Lema_P013310.1</name>
</gene>
<accession>E5A960</accession>
<sequence length="122" mass="13475">MARPYMIFAVLTAWFFGCNAQFGFFDQMFGGGGGGGQQQQQPQNVRSDSVWYQQQYEAAQCSHYLCPGTLSCVHFPHHCPCAWEGVEEKIELGEGIAICASKGGWAEGEFAKKVELARKGML</sequence>
<dbReference type="EMBL" id="FP929138">
    <property type="protein sequence ID" value="CBY00201.1"/>
    <property type="molecule type" value="Genomic_DNA"/>
</dbReference>
<dbReference type="RefSeq" id="XP_003843680.1">
    <property type="nucleotide sequence ID" value="XM_003843632.1"/>
</dbReference>
<dbReference type="SMR" id="E5A960"/>
<dbReference type="STRING" id="985895.E5A960"/>
<dbReference type="EnsemblFungi" id="CBY00201">
    <property type="protein sequence ID" value="CBY00201"/>
    <property type="gene ID" value="LEMA_P013310.1"/>
</dbReference>
<dbReference type="GeneID" id="13290329"/>
<dbReference type="VEuPathDB" id="FungiDB:LEMA_P013310.1"/>
<dbReference type="eggNOG" id="ENOG502S416">
    <property type="taxonomic scope" value="Eukaryota"/>
</dbReference>
<dbReference type="HOGENOM" id="CLU_142363_0_0_1"/>
<dbReference type="InParanoid" id="E5A960"/>
<dbReference type="OMA" id="DNYLCPD"/>
<dbReference type="OrthoDB" id="2234316at2759"/>
<dbReference type="Proteomes" id="UP000002668">
    <property type="component" value="Genome"/>
</dbReference>
<dbReference type="GO" id="GO:0036503">
    <property type="term" value="P:ERAD pathway"/>
    <property type="evidence" value="ECO:0007669"/>
    <property type="project" value="TreeGrafter"/>
</dbReference>
<dbReference type="CDD" id="cd23996">
    <property type="entry name" value="LCL2-like"/>
    <property type="match status" value="1"/>
</dbReference>
<dbReference type="InterPro" id="IPR034543">
    <property type="entry name" value="LCL2"/>
</dbReference>
<dbReference type="PANTHER" id="PTHR38425">
    <property type="entry name" value="LONG CHRONOLOGICAL LIFESPAN PROTEIN 2"/>
    <property type="match status" value="1"/>
</dbReference>
<dbReference type="PANTHER" id="PTHR38425:SF1">
    <property type="entry name" value="LONG CHRONOLOGICAL LIFESPAN PROTEIN 2"/>
    <property type="match status" value="1"/>
</dbReference>
<evidence type="ECO:0000250" key="1"/>
<evidence type="ECO:0000255" key="2"/>
<evidence type="ECO:0000305" key="3"/>
<proteinExistence type="inferred from homology"/>
<comment type="function">
    <text evidence="1">Probable component of the endoplasmic reticulum-associated degradation (ERAD) pathway.</text>
</comment>
<comment type="similarity">
    <text evidence="3">Belongs to the LCL2 family.</text>
</comment>
<name>LCL2_LEPMJ</name>
<protein>
    <recommendedName>
        <fullName>Long chronological lifespan protein 2</fullName>
    </recommendedName>
</protein>
<feature type="signal peptide" evidence="2">
    <location>
        <begin position="1"/>
        <end position="20"/>
    </location>
</feature>
<feature type="chain" id="PRO_0000408610" description="Long chronological lifespan protein 2">
    <location>
        <begin position="21"/>
        <end position="122"/>
    </location>
</feature>
<reference key="1">
    <citation type="journal article" date="2011" name="Nat. Commun.">
        <title>Effector diversification within compartments of the Leptosphaeria maculans genome affected by Repeat-Induced Point mutations.</title>
        <authorList>
            <person name="Rouxel T."/>
            <person name="Grandaubert J."/>
            <person name="Hane J.K."/>
            <person name="Hoede C."/>
            <person name="van de Wouw A.P."/>
            <person name="Couloux A."/>
            <person name="Dominguez V."/>
            <person name="Anthouard V."/>
            <person name="Bally P."/>
            <person name="Bourras S."/>
            <person name="Cozijnsen A.J."/>
            <person name="Ciuffetti L.M."/>
            <person name="Degrave A."/>
            <person name="Dilmaghani A."/>
            <person name="Duret L."/>
            <person name="Fudal I."/>
            <person name="Goodwin S.B."/>
            <person name="Gout L."/>
            <person name="Glaser N."/>
            <person name="Linglin J."/>
            <person name="Kema G.H.J."/>
            <person name="Lapalu N."/>
            <person name="Lawrence C.B."/>
            <person name="May K."/>
            <person name="Meyer M."/>
            <person name="Ollivier B."/>
            <person name="Poulain J."/>
            <person name="Schoch C.L."/>
            <person name="Simon A."/>
            <person name="Spatafora J.W."/>
            <person name="Stachowiak A."/>
            <person name="Turgeon B.G."/>
            <person name="Tyler B.M."/>
            <person name="Vincent D."/>
            <person name="Weissenbach J."/>
            <person name="Amselem J."/>
            <person name="Quesneville H."/>
            <person name="Oliver R.P."/>
            <person name="Wincker P."/>
            <person name="Balesdent M.-H."/>
            <person name="Howlett B.J."/>
        </authorList>
    </citation>
    <scope>NUCLEOTIDE SEQUENCE [LARGE SCALE GENOMIC DNA]</scope>
    <source>
        <strain>JN3 / isolate v23.1.3 / race Av1-4-5-6-7-8</strain>
    </source>
</reference>